<accession>Q1C7K3</accession>
<gene>
    <name evidence="1" type="primary">rnfC</name>
    <name type="ordered locus">YPA_1603</name>
</gene>
<evidence type="ECO:0000255" key="1">
    <source>
        <dbReference type="HAMAP-Rule" id="MF_00461"/>
    </source>
</evidence>
<name>RNFC_YERPA</name>
<dbReference type="EC" id="7.-.-.-" evidence="1"/>
<dbReference type="EMBL" id="CP000308">
    <property type="protein sequence ID" value="ABG13569.1"/>
    <property type="molecule type" value="Genomic_DNA"/>
</dbReference>
<dbReference type="PIR" id="AF0273">
    <property type="entry name" value="AF0273"/>
</dbReference>
<dbReference type="SMR" id="Q1C7K3"/>
<dbReference type="KEGG" id="ypa:YPA_1603"/>
<dbReference type="Proteomes" id="UP000001971">
    <property type="component" value="Chromosome"/>
</dbReference>
<dbReference type="GO" id="GO:0005886">
    <property type="term" value="C:plasma membrane"/>
    <property type="evidence" value="ECO:0007669"/>
    <property type="project" value="UniProtKB-SubCell"/>
</dbReference>
<dbReference type="GO" id="GO:0051539">
    <property type="term" value="F:4 iron, 4 sulfur cluster binding"/>
    <property type="evidence" value="ECO:0007669"/>
    <property type="project" value="UniProtKB-KW"/>
</dbReference>
<dbReference type="GO" id="GO:0009055">
    <property type="term" value="F:electron transfer activity"/>
    <property type="evidence" value="ECO:0007669"/>
    <property type="project" value="InterPro"/>
</dbReference>
<dbReference type="GO" id="GO:0046872">
    <property type="term" value="F:metal ion binding"/>
    <property type="evidence" value="ECO:0007669"/>
    <property type="project" value="UniProtKB-KW"/>
</dbReference>
<dbReference type="GO" id="GO:0022900">
    <property type="term" value="P:electron transport chain"/>
    <property type="evidence" value="ECO:0007669"/>
    <property type="project" value="UniProtKB-UniRule"/>
</dbReference>
<dbReference type="Gene3D" id="3.30.70.20">
    <property type="match status" value="1"/>
</dbReference>
<dbReference type="Gene3D" id="3.40.50.11540">
    <property type="entry name" value="NADH-ubiquinone oxidoreductase 51kDa subunit"/>
    <property type="match status" value="1"/>
</dbReference>
<dbReference type="HAMAP" id="MF_00461">
    <property type="entry name" value="RsxC_RnfC"/>
    <property type="match status" value="1"/>
</dbReference>
<dbReference type="InterPro" id="IPR017896">
    <property type="entry name" value="4Fe4S_Fe-S-bd"/>
</dbReference>
<dbReference type="InterPro" id="IPR017900">
    <property type="entry name" value="4Fe4S_Fe_S_CS"/>
</dbReference>
<dbReference type="InterPro" id="IPR010208">
    <property type="entry name" value="Ion_transpt_RnfC/RsxC"/>
</dbReference>
<dbReference type="InterPro" id="IPR011538">
    <property type="entry name" value="Nuo51_FMN-bd"/>
</dbReference>
<dbReference type="InterPro" id="IPR037225">
    <property type="entry name" value="Nuo51_FMN-bd_sf"/>
</dbReference>
<dbReference type="InterPro" id="IPR026902">
    <property type="entry name" value="RnfC_N"/>
</dbReference>
<dbReference type="InterPro" id="IPR019554">
    <property type="entry name" value="Soluble_ligand-bd"/>
</dbReference>
<dbReference type="NCBIfam" id="NF003454">
    <property type="entry name" value="PRK05035.1"/>
    <property type="match status" value="1"/>
</dbReference>
<dbReference type="NCBIfam" id="TIGR01945">
    <property type="entry name" value="rnfC"/>
    <property type="match status" value="1"/>
</dbReference>
<dbReference type="PANTHER" id="PTHR43034">
    <property type="entry name" value="ION-TRANSLOCATING OXIDOREDUCTASE COMPLEX SUBUNIT C"/>
    <property type="match status" value="1"/>
</dbReference>
<dbReference type="PANTHER" id="PTHR43034:SF2">
    <property type="entry name" value="ION-TRANSLOCATING OXIDOREDUCTASE COMPLEX SUBUNIT C"/>
    <property type="match status" value="1"/>
</dbReference>
<dbReference type="Pfam" id="PF01512">
    <property type="entry name" value="Complex1_51K"/>
    <property type="match status" value="1"/>
</dbReference>
<dbReference type="Pfam" id="PF12838">
    <property type="entry name" value="Fer4_7"/>
    <property type="match status" value="1"/>
</dbReference>
<dbReference type="Pfam" id="PF13375">
    <property type="entry name" value="RnfC_N"/>
    <property type="match status" value="1"/>
</dbReference>
<dbReference type="Pfam" id="PF10531">
    <property type="entry name" value="SLBB"/>
    <property type="match status" value="1"/>
</dbReference>
<dbReference type="SUPFAM" id="SSF46548">
    <property type="entry name" value="alpha-helical ferredoxin"/>
    <property type="match status" value="1"/>
</dbReference>
<dbReference type="SUPFAM" id="SSF142019">
    <property type="entry name" value="Nqo1 FMN-binding domain-like"/>
    <property type="match status" value="1"/>
</dbReference>
<dbReference type="PROSITE" id="PS00198">
    <property type="entry name" value="4FE4S_FER_1"/>
    <property type="match status" value="2"/>
</dbReference>
<dbReference type="PROSITE" id="PS51379">
    <property type="entry name" value="4FE4S_FER_2"/>
    <property type="match status" value="2"/>
</dbReference>
<keyword id="KW-0004">4Fe-4S</keyword>
<keyword id="KW-0997">Cell inner membrane</keyword>
<keyword id="KW-1003">Cell membrane</keyword>
<keyword id="KW-0249">Electron transport</keyword>
<keyword id="KW-0408">Iron</keyword>
<keyword id="KW-0411">Iron-sulfur</keyword>
<keyword id="KW-0472">Membrane</keyword>
<keyword id="KW-0479">Metal-binding</keyword>
<keyword id="KW-0677">Repeat</keyword>
<keyword id="KW-1278">Translocase</keyword>
<keyword id="KW-0813">Transport</keyword>
<feature type="chain" id="PRO_1000013618" description="Ion-translocating oxidoreductase complex subunit C">
    <location>
        <begin position="1"/>
        <end position="620"/>
    </location>
</feature>
<feature type="domain" description="4Fe-4S ferredoxin-type 1" evidence="1">
    <location>
        <begin position="366"/>
        <end position="397"/>
    </location>
</feature>
<feature type="domain" description="4Fe-4S ferredoxin-type 2" evidence="1">
    <location>
        <begin position="407"/>
        <end position="436"/>
    </location>
</feature>
<feature type="binding site" evidence="1">
    <location>
        <position position="377"/>
    </location>
    <ligand>
        <name>[4Fe-4S] cluster</name>
        <dbReference type="ChEBI" id="CHEBI:49883"/>
        <label>1</label>
    </ligand>
</feature>
<feature type="binding site" evidence="1">
    <location>
        <position position="380"/>
    </location>
    <ligand>
        <name>[4Fe-4S] cluster</name>
        <dbReference type="ChEBI" id="CHEBI:49883"/>
        <label>1</label>
    </ligand>
</feature>
<feature type="binding site" evidence="1">
    <location>
        <position position="383"/>
    </location>
    <ligand>
        <name>[4Fe-4S] cluster</name>
        <dbReference type="ChEBI" id="CHEBI:49883"/>
        <label>1</label>
    </ligand>
</feature>
<feature type="binding site" evidence="1">
    <location>
        <position position="387"/>
    </location>
    <ligand>
        <name>[4Fe-4S] cluster</name>
        <dbReference type="ChEBI" id="CHEBI:49883"/>
        <label>2</label>
    </ligand>
</feature>
<feature type="binding site" evidence="1">
    <location>
        <position position="416"/>
    </location>
    <ligand>
        <name>[4Fe-4S] cluster</name>
        <dbReference type="ChEBI" id="CHEBI:49883"/>
        <label>2</label>
    </ligand>
</feature>
<feature type="binding site" evidence="1">
    <location>
        <position position="419"/>
    </location>
    <ligand>
        <name>[4Fe-4S] cluster</name>
        <dbReference type="ChEBI" id="CHEBI:49883"/>
        <label>2</label>
    </ligand>
</feature>
<feature type="binding site" evidence="1">
    <location>
        <position position="422"/>
    </location>
    <ligand>
        <name>[4Fe-4S] cluster</name>
        <dbReference type="ChEBI" id="CHEBI:49883"/>
        <label>2</label>
    </ligand>
</feature>
<feature type="binding site" evidence="1">
    <location>
        <position position="426"/>
    </location>
    <ligand>
        <name>[4Fe-4S] cluster</name>
        <dbReference type="ChEBI" id="CHEBI:49883"/>
        <label>1</label>
    </ligand>
</feature>
<proteinExistence type="inferred from homology"/>
<protein>
    <recommendedName>
        <fullName evidence="1">Ion-translocating oxidoreductase complex subunit C</fullName>
        <ecNumber evidence="1">7.-.-.-</ecNumber>
    </recommendedName>
    <alternativeName>
        <fullName evidence="1">Rnf electron transport complex subunit C</fullName>
    </alternativeName>
</protein>
<reference key="1">
    <citation type="journal article" date="2006" name="J. Bacteriol.">
        <title>Complete genome sequence of Yersinia pestis strains Antiqua and Nepal516: evidence of gene reduction in an emerging pathogen.</title>
        <authorList>
            <person name="Chain P.S.G."/>
            <person name="Hu P."/>
            <person name="Malfatti S.A."/>
            <person name="Radnedge L."/>
            <person name="Larimer F."/>
            <person name="Vergez L.M."/>
            <person name="Worsham P."/>
            <person name="Chu M.C."/>
            <person name="Andersen G.L."/>
        </authorList>
    </citation>
    <scope>NUCLEOTIDE SEQUENCE [LARGE SCALE GENOMIC DNA]</scope>
    <source>
        <strain>Antiqua</strain>
    </source>
</reference>
<sequence>MFKLFTARQHDKIWDFDGGIHPPEMKLQSSTVPMRIAPLPDQLIIPLQQHLGPEGELRVRAGEQVLKGQPLTVGRGRTVPVHAPTSGMITAIAPHTTAHPSGLAELCVHITPDGEDRWREQQPWADYRQRDKMALLDRIHQAGIAGLGGAGFPTASKLQGGLNGIITLIINAAECEPYITADDRLMQEHADEVITGIHILRHLLQPQQVLIGIEDNKPEAIAALQRALRGQDDIHLRVVPTKYPSGGAKQLTKILTGKEVPFGKHSSSIGVLMQNVGTVVAIKRAVIDDEPLIERVVTLTGDALSSPGNFWARIGTPVLYLLKLAGFKPQNPPMVIMGGPLMGFTLPSLDVPIVKISNCILAPAETEMGLSEPEQSCIRCGLCVDACPAGLLPQQLYWFSRGEEHEKARNHNLFDCIECGACAYVCPSNIPLVQYYRQEKAEIRALDQESARAAEAKARFEAKQARLAREKLARELRHKQAAVKLTDADQQTVDAAVSRLTRQSDGSESVINIPAGQMPDNSAVIAAREARKAQARARQAEKQQARSTEETTDVVDPRQAAVAAAIARVKAKKAVQAQHVTTDVAEAGSEAMAEDPRKAAVAAAIARVKAKKAAQAINPD</sequence>
<organism>
    <name type="scientific">Yersinia pestis bv. Antiqua (strain Antiqua)</name>
    <dbReference type="NCBI Taxonomy" id="360102"/>
    <lineage>
        <taxon>Bacteria</taxon>
        <taxon>Pseudomonadati</taxon>
        <taxon>Pseudomonadota</taxon>
        <taxon>Gammaproteobacteria</taxon>
        <taxon>Enterobacterales</taxon>
        <taxon>Yersiniaceae</taxon>
        <taxon>Yersinia</taxon>
    </lineage>
</organism>
<comment type="function">
    <text evidence="1">Part of a membrane-bound complex that couples electron transfer with translocation of ions across the membrane.</text>
</comment>
<comment type="cofactor">
    <cofactor evidence="1">
        <name>[4Fe-4S] cluster</name>
        <dbReference type="ChEBI" id="CHEBI:49883"/>
    </cofactor>
    <text evidence="1">Binds 2 [4Fe-4S] clusters per subunit.</text>
</comment>
<comment type="subunit">
    <text evidence="1">The complex is composed of six subunits: RnfA, RnfB, RnfC, RnfD, RnfE and RnfG.</text>
</comment>
<comment type="subcellular location">
    <subcellularLocation>
        <location evidence="1">Cell inner membrane</location>
        <topology evidence="1">Peripheral membrane protein</topology>
    </subcellularLocation>
</comment>
<comment type="similarity">
    <text evidence="1">Belongs to the 4Fe4S bacterial-type ferredoxin family. RnfC subfamily.</text>
</comment>